<comment type="catalytic activity">
    <reaction evidence="1">
        <text>tRNA(His) + L-histidine + ATP = L-histidyl-tRNA(His) + AMP + diphosphate + H(+)</text>
        <dbReference type="Rhea" id="RHEA:17313"/>
        <dbReference type="Rhea" id="RHEA-COMP:9665"/>
        <dbReference type="Rhea" id="RHEA-COMP:9689"/>
        <dbReference type="ChEBI" id="CHEBI:15378"/>
        <dbReference type="ChEBI" id="CHEBI:30616"/>
        <dbReference type="ChEBI" id="CHEBI:33019"/>
        <dbReference type="ChEBI" id="CHEBI:57595"/>
        <dbReference type="ChEBI" id="CHEBI:78442"/>
        <dbReference type="ChEBI" id="CHEBI:78527"/>
        <dbReference type="ChEBI" id="CHEBI:456215"/>
        <dbReference type="EC" id="6.1.1.21"/>
    </reaction>
</comment>
<comment type="subunit">
    <text evidence="1">Homodimer.</text>
</comment>
<comment type="subcellular location">
    <subcellularLocation>
        <location evidence="1">Cytoplasm</location>
    </subcellularLocation>
</comment>
<comment type="similarity">
    <text evidence="1">Belongs to the class-II aminoacyl-tRNA synthetase family.</text>
</comment>
<protein>
    <recommendedName>
        <fullName evidence="1">Histidine--tRNA ligase</fullName>
        <ecNumber evidence="1">6.1.1.21</ecNumber>
    </recommendedName>
    <alternativeName>
        <fullName evidence="1">Histidyl-tRNA synthetase</fullName>
        <shortName evidence="1">HisRS</shortName>
    </alternativeName>
</protein>
<name>SYH_EHRRG</name>
<keyword id="KW-0030">Aminoacyl-tRNA synthetase</keyword>
<keyword id="KW-0067">ATP-binding</keyword>
<keyword id="KW-0963">Cytoplasm</keyword>
<keyword id="KW-0436">Ligase</keyword>
<keyword id="KW-0547">Nucleotide-binding</keyword>
<keyword id="KW-0648">Protein biosynthesis</keyword>
<organism>
    <name type="scientific">Ehrlichia ruminantium (strain Gardel)</name>
    <dbReference type="NCBI Taxonomy" id="302409"/>
    <lineage>
        <taxon>Bacteria</taxon>
        <taxon>Pseudomonadati</taxon>
        <taxon>Pseudomonadota</taxon>
        <taxon>Alphaproteobacteria</taxon>
        <taxon>Rickettsiales</taxon>
        <taxon>Anaplasmataceae</taxon>
        <taxon>Ehrlichia</taxon>
    </lineage>
</organism>
<sequence length="414" mass="47382">MQHNKLREVRGTKDLLDDELYRFQYIQHLAQTIASRYGFIPVDTPIIEFTEVFTKLGNTSDIVTKEMYNFKDKAGEDITLRPEFTSAIVRLLISKNLTIPVKLFSSGPVFRYERPQKCRQRQFHQINFEFFGSDSPIADVEMISLCYNILSELKLSDRIKLEINFLGDQETINSYKIHLVEYLNKYQKDLSEDSQRRLVVNPLRILDSKSPEDCKILLNAPSISDFYTQNSQNFFKEVLDGLDNLSINYVINHNIVRGLDYYCKTVFEFTTSELGSQNSVIAGGRYDGLVKSMGGHSTPAIGFAAGVERLSALIDYEHKKPKRIVLIPIGDDATSYAIKLAYELRCKGIHVCWNNYRGTSLKNELRKANDTDIVLIFGDEELQSNTVKVKDMKTGDQQNVAVCDLLDNLLHRIV</sequence>
<dbReference type="EC" id="6.1.1.21" evidence="1"/>
<dbReference type="EMBL" id="CR925677">
    <property type="protein sequence ID" value="CAI28180.1"/>
    <property type="molecule type" value="Genomic_DNA"/>
</dbReference>
<dbReference type="RefSeq" id="WP_011255803.1">
    <property type="nucleotide sequence ID" value="NC_006831.1"/>
</dbReference>
<dbReference type="SMR" id="Q5FG57"/>
<dbReference type="KEGG" id="erg:ERGA_CDS_07280"/>
<dbReference type="HOGENOM" id="CLU_025113_1_0_5"/>
<dbReference type="OrthoDB" id="9800814at2"/>
<dbReference type="Proteomes" id="UP000000533">
    <property type="component" value="Chromosome"/>
</dbReference>
<dbReference type="GO" id="GO:0005737">
    <property type="term" value="C:cytoplasm"/>
    <property type="evidence" value="ECO:0007669"/>
    <property type="project" value="UniProtKB-SubCell"/>
</dbReference>
<dbReference type="GO" id="GO:0005524">
    <property type="term" value="F:ATP binding"/>
    <property type="evidence" value="ECO:0007669"/>
    <property type="project" value="UniProtKB-UniRule"/>
</dbReference>
<dbReference type="GO" id="GO:0004821">
    <property type="term" value="F:histidine-tRNA ligase activity"/>
    <property type="evidence" value="ECO:0007669"/>
    <property type="project" value="UniProtKB-UniRule"/>
</dbReference>
<dbReference type="GO" id="GO:0006427">
    <property type="term" value="P:histidyl-tRNA aminoacylation"/>
    <property type="evidence" value="ECO:0007669"/>
    <property type="project" value="UniProtKB-UniRule"/>
</dbReference>
<dbReference type="CDD" id="cd00773">
    <property type="entry name" value="HisRS-like_core"/>
    <property type="match status" value="1"/>
</dbReference>
<dbReference type="Gene3D" id="3.40.50.800">
    <property type="entry name" value="Anticodon-binding domain"/>
    <property type="match status" value="1"/>
</dbReference>
<dbReference type="Gene3D" id="3.30.930.10">
    <property type="entry name" value="Bira Bifunctional Protein, Domain 2"/>
    <property type="match status" value="1"/>
</dbReference>
<dbReference type="HAMAP" id="MF_00127">
    <property type="entry name" value="His_tRNA_synth"/>
    <property type="match status" value="1"/>
</dbReference>
<dbReference type="InterPro" id="IPR006195">
    <property type="entry name" value="aa-tRNA-synth_II"/>
</dbReference>
<dbReference type="InterPro" id="IPR045864">
    <property type="entry name" value="aa-tRNA-synth_II/BPL/LPL"/>
</dbReference>
<dbReference type="InterPro" id="IPR004154">
    <property type="entry name" value="Anticodon-bd"/>
</dbReference>
<dbReference type="InterPro" id="IPR036621">
    <property type="entry name" value="Anticodon-bd_dom_sf"/>
</dbReference>
<dbReference type="InterPro" id="IPR015807">
    <property type="entry name" value="His-tRNA-ligase"/>
</dbReference>
<dbReference type="InterPro" id="IPR041715">
    <property type="entry name" value="HisRS-like_core"/>
</dbReference>
<dbReference type="InterPro" id="IPR004516">
    <property type="entry name" value="HisRS/HisZ"/>
</dbReference>
<dbReference type="NCBIfam" id="TIGR00442">
    <property type="entry name" value="hisS"/>
    <property type="match status" value="1"/>
</dbReference>
<dbReference type="PANTHER" id="PTHR43707:SF1">
    <property type="entry name" value="HISTIDINE--TRNA LIGASE, MITOCHONDRIAL-RELATED"/>
    <property type="match status" value="1"/>
</dbReference>
<dbReference type="PANTHER" id="PTHR43707">
    <property type="entry name" value="HISTIDYL-TRNA SYNTHETASE"/>
    <property type="match status" value="1"/>
</dbReference>
<dbReference type="Pfam" id="PF03129">
    <property type="entry name" value="HGTP_anticodon"/>
    <property type="match status" value="1"/>
</dbReference>
<dbReference type="Pfam" id="PF13393">
    <property type="entry name" value="tRNA-synt_His"/>
    <property type="match status" value="1"/>
</dbReference>
<dbReference type="PIRSF" id="PIRSF001549">
    <property type="entry name" value="His-tRNA_synth"/>
    <property type="match status" value="1"/>
</dbReference>
<dbReference type="SUPFAM" id="SSF52954">
    <property type="entry name" value="Class II aaRS ABD-related"/>
    <property type="match status" value="1"/>
</dbReference>
<dbReference type="SUPFAM" id="SSF55681">
    <property type="entry name" value="Class II aaRS and biotin synthetases"/>
    <property type="match status" value="1"/>
</dbReference>
<dbReference type="PROSITE" id="PS50862">
    <property type="entry name" value="AA_TRNA_LIGASE_II"/>
    <property type="match status" value="1"/>
</dbReference>
<proteinExistence type="inferred from homology"/>
<gene>
    <name evidence="1" type="primary">hisS</name>
    <name type="ordered locus">ERGA_CDS_07280</name>
</gene>
<evidence type="ECO:0000255" key="1">
    <source>
        <dbReference type="HAMAP-Rule" id="MF_00127"/>
    </source>
</evidence>
<feature type="chain" id="PRO_0000136157" description="Histidine--tRNA ligase">
    <location>
        <begin position="1"/>
        <end position="414"/>
    </location>
</feature>
<reference key="1">
    <citation type="journal article" date="2006" name="J. Bacteriol.">
        <title>Comparative genomic analysis of three strains of Ehrlichia ruminantium reveals an active process of genome size plasticity.</title>
        <authorList>
            <person name="Frutos R."/>
            <person name="Viari A."/>
            <person name="Ferraz C."/>
            <person name="Morgat A."/>
            <person name="Eychenie S."/>
            <person name="Kandassamy Y."/>
            <person name="Chantal I."/>
            <person name="Bensaid A."/>
            <person name="Coissac E."/>
            <person name="Vachiery N."/>
            <person name="Demaille J."/>
            <person name="Martinez D."/>
        </authorList>
    </citation>
    <scope>NUCLEOTIDE SEQUENCE [LARGE SCALE GENOMIC DNA]</scope>
    <source>
        <strain>Gardel</strain>
    </source>
</reference>
<accession>Q5FG57</accession>